<comment type="function">
    <text evidence="1">Pyruvate carboxylase catalyzes a 2-step reaction, involving the ATP-dependent carboxylation of the covalently attached biotin in the first step and the transfer of the carboxyl group to pyruvate in the second.</text>
</comment>
<comment type="catalytic activity">
    <reaction>
        <text>hydrogencarbonate + pyruvate + ATP = oxaloacetate + ADP + phosphate + H(+)</text>
        <dbReference type="Rhea" id="RHEA:20844"/>
        <dbReference type="ChEBI" id="CHEBI:15361"/>
        <dbReference type="ChEBI" id="CHEBI:15378"/>
        <dbReference type="ChEBI" id="CHEBI:16452"/>
        <dbReference type="ChEBI" id="CHEBI:17544"/>
        <dbReference type="ChEBI" id="CHEBI:30616"/>
        <dbReference type="ChEBI" id="CHEBI:43474"/>
        <dbReference type="ChEBI" id="CHEBI:456216"/>
        <dbReference type="EC" id="6.4.1.1"/>
    </reaction>
</comment>
<comment type="cofactor">
    <cofactor evidence="1">
        <name>biotin</name>
        <dbReference type="ChEBI" id="CHEBI:57586"/>
    </cofactor>
</comment>
<comment type="cofactor">
    <cofactor evidence="1">
        <name>Zn(2+)</name>
        <dbReference type="ChEBI" id="CHEBI:29105"/>
    </cofactor>
</comment>
<comment type="pathway">
    <text>Carbohydrate biosynthesis; gluconeogenesis.</text>
</comment>
<comment type="subcellular location">
    <subcellularLocation>
        <location evidence="1">Cytoplasm</location>
    </subcellularLocation>
</comment>
<reference key="1">
    <citation type="submission" date="1995-10" db="EMBL/GenBank/DDBJ databases">
        <title>Biotin-dependent enzymes in Schizosaccharomyces pombe: cloning and nucleotide sequences of acetyl-CoA carboxylase and pyruvate carboxylase.</title>
        <authorList>
            <person name="Saito A."/>
            <person name="Kazuta Y."/>
            <person name="Toh H."/>
            <person name="Kondo H."/>
            <person name="Tanabe T."/>
        </authorList>
    </citation>
    <scope>NUCLEOTIDE SEQUENCE [GENOMIC DNA]</scope>
    <source>
        <strain>972 / HM123</strain>
    </source>
</reference>
<reference key="2">
    <citation type="journal article" date="2002" name="Nature">
        <title>The genome sequence of Schizosaccharomyces pombe.</title>
        <authorList>
            <person name="Wood V."/>
            <person name="Gwilliam R."/>
            <person name="Rajandream M.A."/>
            <person name="Lyne M.H."/>
            <person name="Lyne R."/>
            <person name="Stewart A."/>
            <person name="Sgouros J.G."/>
            <person name="Peat N."/>
            <person name="Hayles J."/>
            <person name="Baker S.G."/>
            <person name="Basham D."/>
            <person name="Bowman S."/>
            <person name="Brooks K."/>
            <person name="Brown D."/>
            <person name="Brown S."/>
            <person name="Chillingworth T."/>
            <person name="Churcher C.M."/>
            <person name="Collins M."/>
            <person name="Connor R."/>
            <person name="Cronin A."/>
            <person name="Davis P."/>
            <person name="Feltwell T."/>
            <person name="Fraser A."/>
            <person name="Gentles S."/>
            <person name="Goble A."/>
            <person name="Hamlin N."/>
            <person name="Harris D.E."/>
            <person name="Hidalgo J."/>
            <person name="Hodgson G."/>
            <person name="Holroyd S."/>
            <person name="Hornsby T."/>
            <person name="Howarth S."/>
            <person name="Huckle E.J."/>
            <person name="Hunt S."/>
            <person name="Jagels K."/>
            <person name="James K.D."/>
            <person name="Jones L."/>
            <person name="Jones M."/>
            <person name="Leather S."/>
            <person name="McDonald S."/>
            <person name="McLean J."/>
            <person name="Mooney P."/>
            <person name="Moule S."/>
            <person name="Mungall K.L."/>
            <person name="Murphy L.D."/>
            <person name="Niblett D."/>
            <person name="Odell C."/>
            <person name="Oliver K."/>
            <person name="O'Neil S."/>
            <person name="Pearson D."/>
            <person name="Quail M.A."/>
            <person name="Rabbinowitsch E."/>
            <person name="Rutherford K.M."/>
            <person name="Rutter S."/>
            <person name="Saunders D."/>
            <person name="Seeger K."/>
            <person name="Sharp S."/>
            <person name="Skelton J."/>
            <person name="Simmonds M.N."/>
            <person name="Squares R."/>
            <person name="Squares S."/>
            <person name="Stevens K."/>
            <person name="Taylor K."/>
            <person name="Taylor R.G."/>
            <person name="Tivey A."/>
            <person name="Walsh S.V."/>
            <person name="Warren T."/>
            <person name="Whitehead S."/>
            <person name="Woodward J.R."/>
            <person name="Volckaert G."/>
            <person name="Aert R."/>
            <person name="Robben J."/>
            <person name="Grymonprez B."/>
            <person name="Weltjens I."/>
            <person name="Vanstreels E."/>
            <person name="Rieger M."/>
            <person name="Schaefer M."/>
            <person name="Mueller-Auer S."/>
            <person name="Gabel C."/>
            <person name="Fuchs M."/>
            <person name="Duesterhoeft A."/>
            <person name="Fritzc C."/>
            <person name="Holzer E."/>
            <person name="Moestl D."/>
            <person name="Hilbert H."/>
            <person name="Borzym K."/>
            <person name="Langer I."/>
            <person name="Beck A."/>
            <person name="Lehrach H."/>
            <person name="Reinhardt R."/>
            <person name="Pohl T.M."/>
            <person name="Eger P."/>
            <person name="Zimmermann W."/>
            <person name="Wedler H."/>
            <person name="Wambutt R."/>
            <person name="Purnelle B."/>
            <person name="Goffeau A."/>
            <person name="Cadieu E."/>
            <person name="Dreano S."/>
            <person name="Gloux S."/>
            <person name="Lelaure V."/>
            <person name="Mottier S."/>
            <person name="Galibert F."/>
            <person name="Aves S.J."/>
            <person name="Xiang Z."/>
            <person name="Hunt C."/>
            <person name="Moore K."/>
            <person name="Hurst S.M."/>
            <person name="Lucas M."/>
            <person name="Rochet M."/>
            <person name="Gaillardin C."/>
            <person name="Tallada V.A."/>
            <person name="Garzon A."/>
            <person name="Thode G."/>
            <person name="Daga R.R."/>
            <person name="Cruzado L."/>
            <person name="Jimenez J."/>
            <person name="Sanchez M."/>
            <person name="del Rey F."/>
            <person name="Benito J."/>
            <person name="Dominguez A."/>
            <person name="Revuelta J.L."/>
            <person name="Moreno S."/>
            <person name="Armstrong J."/>
            <person name="Forsburg S.L."/>
            <person name="Cerutti L."/>
            <person name="Lowe T."/>
            <person name="McCombie W.R."/>
            <person name="Paulsen I."/>
            <person name="Potashkin J."/>
            <person name="Shpakovski G.V."/>
            <person name="Ussery D."/>
            <person name="Barrell B.G."/>
            <person name="Nurse P."/>
        </authorList>
    </citation>
    <scope>NUCLEOTIDE SEQUENCE [LARGE SCALE GENOMIC DNA]</scope>
    <source>
        <strain>972 / ATCC 24843</strain>
    </source>
</reference>
<protein>
    <recommendedName>
        <fullName>Pyruvate carboxylase</fullName>
        <ecNumber>6.4.1.1</ecNumber>
    </recommendedName>
    <alternativeName>
        <fullName>Pyruvic carboxylase</fullName>
        <shortName>PCB</shortName>
    </alternativeName>
</protein>
<evidence type="ECO:0000250" key="1"/>
<evidence type="ECO:0000255" key="2">
    <source>
        <dbReference type="PROSITE-ProRule" id="PRU00409"/>
    </source>
</evidence>
<evidence type="ECO:0000255" key="3">
    <source>
        <dbReference type="PROSITE-ProRule" id="PRU01066"/>
    </source>
</evidence>
<evidence type="ECO:0000255" key="4">
    <source>
        <dbReference type="PROSITE-ProRule" id="PRU01151"/>
    </source>
</evidence>
<evidence type="ECO:0000305" key="5"/>
<sequence>MTSKYDALLHNQSTNTNPFSKLQDRSSLLGEKFTKVLVANRSEIAIRVFRTAHELSMHTVAIYSYEDRLSMHRQKADESYPIGKVGQYSPVGAYLAIDEIVSIAKRTGANLVHPGYGFLSENAEFARKVNEAGMQFVGPSPEVIDSLGDKTKARAIAIRCGVPVVPGTPGPVEHYEEAEAFVKEYGLPVIIKAAMGGGGRGMRVVRSADTLKESFERARSEALASFGDGTVFIERFLDKPKHIEIQLMADKAGNVIHLHERDCSVQRRHQKVVEIAPAKDLDPKIRQALYDDAIKIAKEVKYCNAGTAEFLLDQKGRHYFIEINPRIQVEHTITEEITGVDIVSAQLHVAAGFTLPEIGLTQDKISTRGFAIQCRVTTEDPNNGFAPDIGKIEVYRSAGGNGVRLDGANGFAGSVITPHYDSMLVKCTCHDATYEYTRRKMIRSLIEFRVRGVKTNIPFVLRLLMHDTFIQGNCWTTFIDDTPELFQLYRSRNRAQKLLAYLGDLAVNGSSIKGQNGEPALKSEIVMPVLLDSTGNQIDVSHPSEKGWRKLLLDNGPAAFAKAVRNHKRGLIMDTTWRDAHQSLLATRVRTIDLVNIAPYTSHALASAYSLEMWGGATFDVSMRFLHECPWDRLRRLRKLVPNIPFQMLLRGANGLCYSSLPDNVIYFFCEQAKKNGIDIFRVFDALNDVNNLSLGIDAAKRAGGVVEATMCYSGDMLNPKKKYNLDYYVNLVDKMVEMGIHILGIKDMAGVMKPKAARLLISAIREKHPELPIHVHTHDSAGTAVASMAAALEAGADVVDVATDSMSGLTSQPSFGAVLASVDGTDKQLEFDNNQLREIDSYWAQMRLLYSPFESEIKGTDSDVYNHEIPGGQLTNLKFQATSLGLGTQWAETKKAYIEANKLLGDIIKVTPTSKVVGDLAQFMVQNKLSAEDVENRATTLDFPASVLDFFQGLMGQPYGGFPEPLRTNVLKGRRQPLTDRPGKFLPAADFDAIRKLLSEKFGVSSDCDIAAYTQFPGVFEEYRQFVDRYGDLTTVPTKFFLSRPEMNEEMHVEIDQGKTLIVKFVALGPLNPRTGQREVYFELNGENRHVTVEDKKAAIETVTRPRADPGNPGHVAAPMSGTIVEIRVKEGAKVKKGDIIAVLSAMKMEIVISAPHSGVLKSLAVVQGDSVNGGDLCAVLEHE</sequence>
<gene>
    <name type="primary">pyr1</name>
    <name type="ORF">SPBC17G9.11c</name>
</gene>
<accession>Q9UUE1</accession>
<accession>P78822</accession>
<organism>
    <name type="scientific">Schizosaccharomyces pombe (strain 972 / ATCC 24843)</name>
    <name type="common">Fission yeast</name>
    <dbReference type="NCBI Taxonomy" id="284812"/>
    <lineage>
        <taxon>Eukaryota</taxon>
        <taxon>Fungi</taxon>
        <taxon>Dikarya</taxon>
        <taxon>Ascomycota</taxon>
        <taxon>Taphrinomycotina</taxon>
        <taxon>Schizosaccharomycetes</taxon>
        <taxon>Schizosaccharomycetales</taxon>
        <taxon>Schizosaccharomycetaceae</taxon>
        <taxon>Schizosaccharomyces</taxon>
    </lineage>
</organism>
<feature type="chain" id="PRO_0000146823" description="Pyruvate carboxylase">
    <location>
        <begin position="1"/>
        <end position="1185"/>
    </location>
</feature>
<feature type="domain" description="Biotin carboxylation">
    <location>
        <begin position="32"/>
        <end position="484"/>
    </location>
</feature>
<feature type="domain" description="ATP-grasp" evidence="2">
    <location>
        <begin position="154"/>
        <end position="351"/>
    </location>
</feature>
<feature type="domain" description="Pyruvate carboxyltransferase" evidence="4">
    <location>
        <begin position="570"/>
        <end position="838"/>
    </location>
</feature>
<feature type="domain" description="Biotinyl-binding" evidence="3">
    <location>
        <begin position="1108"/>
        <end position="1183"/>
    </location>
</feature>
<feature type="active site" evidence="1">
    <location>
        <position position="326"/>
    </location>
</feature>
<feature type="binding site" evidence="1">
    <location>
        <position position="150"/>
    </location>
    <ligand>
        <name>ATP</name>
        <dbReference type="ChEBI" id="CHEBI:30616"/>
    </ligand>
</feature>
<feature type="binding site" evidence="1">
    <location>
        <position position="234"/>
    </location>
    <ligand>
        <name>ATP</name>
        <dbReference type="ChEBI" id="CHEBI:30616"/>
    </ligand>
</feature>
<feature type="binding site" evidence="1">
    <location>
        <position position="269"/>
    </location>
    <ligand>
        <name>ATP</name>
        <dbReference type="ChEBI" id="CHEBI:30616"/>
    </ligand>
</feature>
<feature type="binding site" evidence="1">
    <location>
        <begin position="578"/>
        <end position="582"/>
    </location>
    <ligand>
        <name>substrate</name>
    </ligand>
</feature>
<feature type="binding site" evidence="1">
    <location>
        <position position="579"/>
    </location>
    <ligand>
        <name>a divalent metal cation</name>
        <dbReference type="ChEBI" id="CHEBI:60240"/>
    </ligand>
</feature>
<feature type="binding site" evidence="1">
    <location>
        <position position="651"/>
    </location>
    <ligand>
        <name>substrate</name>
    </ligand>
</feature>
<feature type="binding site" description="via carbamate group" evidence="1">
    <location>
        <position position="747"/>
    </location>
    <ligand>
        <name>a divalent metal cation</name>
        <dbReference type="ChEBI" id="CHEBI:60240"/>
    </ligand>
</feature>
<feature type="binding site" evidence="1">
    <location>
        <position position="777"/>
    </location>
    <ligand>
        <name>a divalent metal cation</name>
        <dbReference type="ChEBI" id="CHEBI:60240"/>
    </ligand>
</feature>
<feature type="binding site" evidence="1">
    <location>
        <position position="779"/>
    </location>
    <ligand>
        <name>a divalent metal cation</name>
        <dbReference type="ChEBI" id="CHEBI:60240"/>
    </ligand>
</feature>
<feature type="binding site" evidence="1">
    <location>
        <position position="912"/>
    </location>
    <ligand>
        <name>substrate</name>
    </ligand>
</feature>
<feature type="modified residue" description="N6-carboxylysine" evidence="1">
    <location>
        <position position="747"/>
    </location>
</feature>
<feature type="modified residue" description="N6-biotinyllysine" evidence="1 3">
    <location>
        <position position="1149"/>
    </location>
</feature>
<feature type="sequence conflict" description="In Ref. 1; BAA11239." evidence="5" ref="1">
    <original>R</original>
    <variation>I</variation>
    <location>
        <position position="68"/>
    </location>
</feature>
<name>PYC_SCHPO</name>
<dbReference type="EC" id="6.4.1.1"/>
<dbReference type="EMBL" id="D78170">
    <property type="protein sequence ID" value="BAA11239.1"/>
    <property type="molecule type" value="Genomic_DNA"/>
</dbReference>
<dbReference type="EMBL" id="CU329671">
    <property type="protein sequence ID" value="CAB52809.1"/>
    <property type="molecule type" value="Genomic_DNA"/>
</dbReference>
<dbReference type="PIR" id="T39734">
    <property type="entry name" value="T39734"/>
</dbReference>
<dbReference type="RefSeq" id="NP_595900.1">
    <property type="nucleotide sequence ID" value="NM_001021807.2"/>
</dbReference>
<dbReference type="SMR" id="Q9UUE1"/>
<dbReference type="BioGRID" id="276216">
    <property type="interactions" value="3"/>
</dbReference>
<dbReference type="FunCoup" id="Q9UUE1">
    <property type="interactions" value="498"/>
</dbReference>
<dbReference type="STRING" id="284812.Q9UUE1"/>
<dbReference type="iPTMnet" id="Q9UUE1"/>
<dbReference type="PaxDb" id="4896-SPBC17G9.11c.1"/>
<dbReference type="EnsemblFungi" id="SPBC17G9.11c.1">
    <property type="protein sequence ID" value="SPBC17G9.11c.1:pep"/>
    <property type="gene ID" value="SPBC17G9.11c"/>
</dbReference>
<dbReference type="GeneID" id="2539661"/>
<dbReference type="KEGG" id="spo:2539661"/>
<dbReference type="PomBase" id="SPBC17G9.11c">
    <property type="gene designation" value="pyr1"/>
</dbReference>
<dbReference type="VEuPathDB" id="FungiDB:SPBC17G9.11c"/>
<dbReference type="eggNOG" id="KOG0369">
    <property type="taxonomic scope" value="Eukaryota"/>
</dbReference>
<dbReference type="HOGENOM" id="CLU_000395_0_1_1"/>
<dbReference type="InParanoid" id="Q9UUE1"/>
<dbReference type="OMA" id="AEACICY"/>
<dbReference type="PhylomeDB" id="Q9UUE1"/>
<dbReference type="Reactome" id="R-SPO-196780">
    <property type="pathway name" value="Biotin transport and metabolism"/>
</dbReference>
<dbReference type="Reactome" id="R-SPO-70263">
    <property type="pathway name" value="Gluconeogenesis"/>
</dbReference>
<dbReference type="Reactome" id="R-SPO-70268">
    <property type="pathway name" value="Pyruvate metabolism"/>
</dbReference>
<dbReference type="UniPathway" id="UPA00138"/>
<dbReference type="PRO" id="PR:Q9UUE1"/>
<dbReference type="Proteomes" id="UP000002485">
    <property type="component" value="Chromosome II"/>
</dbReference>
<dbReference type="GO" id="GO:0005829">
    <property type="term" value="C:cytosol"/>
    <property type="evidence" value="ECO:0007005"/>
    <property type="project" value="PomBase"/>
</dbReference>
<dbReference type="GO" id="GO:0005524">
    <property type="term" value="F:ATP binding"/>
    <property type="evidence" value="ECO:0007669"/>
    <property type="project" value="UniProtKB-KW"/>
</dbReference>
<dbReference type="GO" id="GO:0046872">
    <property type="term" value="F:metal ion binding"/>
    <property type="evidence" value="ECO:0007669"/>
    <property type="project" value="UniProtKB-KW"/>
</dbReference>
<dbReference type="GO" id="GO:0004736">
    <property type="term" value="F:pyruvate carboxylase activity"/>
    <property type="evidence" value="ECO:0000318"/>
    <property type="project" value="GO_Central"/>
</dbReference>
<dbReference type="GO" id="GO:0006091">
    <property type="term" value="P:generation of precursor metabolites and energy"/>
    <property type="evidence" value="ECO:0000303"/>
    <property type="project" value="PomBase"/>
</dbReference>
<dbReference type="GO" id="GO:0006094">
    <property type="term" value="P:gluconeogenesis"/>
    <property type="evidence" value="ECO:0000318"/>
    <property type="project" value="GO_Central"/>
</dbReference>
<dbReference type="GO" id="GO:0006090">
    <property type="term" value="P:pyruvate metabolic process"/>
    <property type="evidence" value="ECO:0000318"/>
    <property type="project" value="GO_Central"/>
</dbReference>
<dbReference type="CDD" id="cd06850">
    <property type="entry name" value="biotinyl_domain"/>
    <property type="match status" value="1"/>
</dbReference>
<dbReference type="CDD" id="cd07937">
    <property type="entry name" value="DRE_TIM_PC_TC_5S"/>
    <property type="match status" value="1"/>
</dbReference>
<dbReference type="FunFam" id="2.40.50.100:FF:000003">
    <property type="entry name" value="Acetyl-CoA carboxylase biotin carboxyl carrier protein"/>
    <property type="match status" value="1"/>
</dbReference>
<dbReference type="FunFam" id="3.30.1490.20:FF:000018">
    <property type="entry name" value="Biotin carboxylase"/>
    <property type="match status" value="1"/>
</dbReference>
<dbReference type="FunFam" id="3.40.50.20:FF:000010">
    <property type="entry name" value="Propionyl-CoA carboxylase subunit alpha"/>
    <property type="match status" value="1"/>
</dbReference>
<dbReference type="FunFam" id="3.20.20.70:FF:000033">
    <property type="entry name" value="Pyruvate carboxylase"/>
    <property type="match status" value="1"/>
</dbReference>
<dbReference type="FunFam" id="3.30.470.20:FF:000012">
    <property type="entry name" value="Pyruvate carboxylase"/>
    <property type="match status" value="1"/>
</dbReference>
<dbReference type="Gene3D" id="2.40.50.100">
    <property type="match status" value="1"/>
</dbReference>
<dbReference type="Gene3D" id="3.20.20.70">
    <property type="entry name" value="Aldolase class I"/>
    <property type="match status" value="1"/>
</dbReference>
<dbReference type="Gene3D" id="3.30.470.20">
    <property type="entry name" value="ATP-grasp fold, B domain"/>
    <property type="match status" value="1"/>
</dbReference>
<dbReference type="InterPro" id="IPR013785">
    <property type="entry name" value="Aldolase_TIM"/>
</dbReference>
<dbReference type="InterPro" id="IPR011761">
    <property type="entry name" value="ATP-grasp"/>
</dbReference>
<dbReference type="InterPro" id="IPR005481">
    <property type="entry name" value="BC-like_N"/>
</dbReference>
<dbReference type="InterPro" id="IPR001882">
    <property type="entry name" value="Biotin_BS"/>
</dbReference>
<dbReference type="InterPro" id="IPR011764">
    <property type="entry name" value="Biotin_carboxylation_dom"/>
</dbReference>
<dbReference type="InterPro" id="IPR005482">
    <property type="entry name" value="Biotin_COase_C"/>
</dbReference>
<dbReference type="InterPro" id="IPR000089">
    <property type="entry name" value="Biotin_lipoyl"/>
</dbReference>
<dbReference type="InterPro" id="IPR003379">
    <property type="entry name" value="Carboxylase_cons_dom"/>
</dbReference>
<dbReference type="InterPro" id="IPR005479">
    <property type="entry name" value="CbamoylP_synth_lsu-like_ATP-bd"/>
</dbReference>
<dbReference type="InterPro" id="IPR055268">
    <property type="entry name" value="PCB-like"/>
</dbReference>
<dbReference type="InterPro" id="IPR016185">
    <property type="entry name" value="PreATP-grasp_dom_sf"/>
</dbReference>
<dbReference type="InterPro" id="IPR000891">
    <property type="entry name" value="PYR_CT"/>
</dbReference>
<dbReference type="InterPro" id="IPR005930">
    <property type="entry name" value="Pyruv_COase"/>
</dbReference>
<dbReference type="InterPro" id="IPR011054">
    <property type="entry name" value="Rudment_hybrid_motif"/>
</dbReference>
<dbReference type="InterPro" id="IPR011053">
    <property type="entry name" value="Single_hybrid_motif"/>
</dbReference>
<dbReference type="NCBIfam" id="NF006761">
    <property type="entry name" value="PRK09282.1"/>
    <property type="match status" value="1"/>
</dbReference>
<dbReference type="NCBIfam" id="NF009554">
    <property type="entry name" value="PRK12999.1"/>
    <property type="match status" value="1"/>
</dbReference>
<dbReference type="NCBIfam" id="TIGR01235">
    <property type="entry name" value="pyruv_carbox"/>
    <property type="match status" value="1"/>
</dbReference>
<dbReference type="PANTHER" id="PTHR43778">
    <property type="entry name" value="PYRUVATE CARBOXYLASE"/>
    <property type="match status" value="1"/>
</dbReference>
<dbReference type="PANTHER" id="PTHR43778:SF2">
    <property type="entry name" value="PYRUVATE CARBOXYLASE, MITOCHONDRIAL"/>
    <property type="match status" value="1"/>
</dbReference>
<dbReference type="Pfam" id="PF02785">
    <property type="entry name" value="Biotin_carb_C"/>
    <property type="match status" value="1"/>
</dbReference>
<dbReference type="Pfam" id="PF00289">
    <property type="entry name" value="Biotin_carb_N"/>
    <property type="match status" value="1"/>
</dbReference>
<dbReference type="Pfam" id="PF00364">
    <property type="entry name" value="Biotin_lipoyl"/>
    <property type="match status" value="1"/>
</dbReference>
<dbReference type="Pfam" id="PF02786">
    <property type="entry name" value="CPSase_L_D2"/>
    <property type="match status" value="1"/>
</dbReference>
<dbReference type="Pfam" id="PF00682">
    <property type="entry name" value="HMGL-like"/>
    <property type="match status" value="1"/>
</dbReference>
<dbReference type="Pfam" id="PF02436">
    <property type="entry name" value="PYC_OADA"/>
    <property type="match status" value="1"/>
</dbReference>
<dbReference type="PIRSF" id="PIRSF001594">
    <property type="entry name" value="Pyruv_carbox"/>
    <property type="match status" value="1"/>
</dbReference>
<dbReference type="SMART" id="SM00878">
    <property type="entry name" value="Biotin_carb_C"/>
    <property type="match status" value="1"/>
</dbReference>
<dbReference type="SUPFAM" id="SSF51569">
    <property type="entry name" value="Aldolase"/>
    <property type="match status" value="1"/>
</dbReference>
<dbReference type="SUPFAM" id="SSF56059">
    <property type="entry name" value="Glutathione synthetase ATP-binding domain-like"/>
    <property type="match status" value="1"/>
</dbReference>
<dbReference type="SUPFAM" id="SSF89000">
    <property type="entry name" value="post-HMGL domain-like"/>
    <property type="match status" value="1"/>
</dbReference>
<dbReference type="SUPFAM" id="SSF52440">
    <property type="entry name" value="PreATP-grasp domain"/>
    <property type="match status" value="1"/>
</dbReference>
<dbReference type="SUPFAM" id="SSF51246">
    <property type="entry name" value="Rudiment single hybrid motif"/>
    <property type="match status" value="1"/>
</dbReference>
<dbReference type="SUPFAM" id="SSF51230">
    <property type="entry name" value="Single hybrid motif"/>
    <property type="match status" value="1"/>
</dbReference>
<dbReference type="PROSITE" id="PS50975">
    <property type="entry name" value="ATP_GRASP"/>
    <property type="match status" value="1"/>
</dbReference>
<dbReference type="PROSITE" id="PS50979">
    <property type="entry name" value="BC"/>
    <property type="match status" value="1"/>
</dbReference>
<dbReference type="PROSITE" id="PS00188">
    <property type="entry name" value="BIOTIN"/>
    <property type="match status" value="1"/>
</dbReference>
<dbReference type="PROSITE" id="PS50968">
    <property type="entry name" value="BIOTINYL_LIPOYL"/>
    <property type="match status" value="1"/>
</dbReference>
<dbReference type="PROSITE" id="PS00867">
    <property type="entry name" value="CPSASE_2"/>
    <property type="match status" value="1"/>
</dbReference>
<dbReference type="PROSITE" id="PS50991">
    <property type="entry name" value="PYR_CT"/>
    <property type="match status" value="1"/>
</dbReference>
<keyword id="KW-0067">ATP-binding</keyword>
<keyword id="KW-0092">Biotin</keyword>
<keyword id="KW-0963">Cytoplasm</keyword>
<keyword id="KW-0312">Gluconeogenesis</keyword>
<keyword id="KW-0436">Ligase</keyword>
<keyword id="KW-0479">Metal-binding</keyword>
<keyword id="KW-0511">Multifunctional enzyme</keyword>
<keyword id="KW-0547">Nucleotide-binding</keyword>
<keyword id="KW-1185">Reference proteome</keyword>
<keyword id="KW-0862">Zinc</keyword>
<proteinExistence type="inferred from homology"/>